<gene>
    <name evidence="1" type="primary">proB</name>
    <name type="ordered locus">Rmet_3103</name>
</gene>
<protein>
    <recommendedName>
        <fullName evidence="1">Glutamate 5-kinase</fullName>
        <ecNumber evidence="1">2.7.2.11</ecNumber>
    </recommendedName>
    <alternativeName>
        <fullName evidence="1">Gamma-glutamyl kinase</fullName>
        <shortName evidence="1">GK</shortName>
    </alternativeName>
</protein>
<keyword id="KW-0028">Amino-acid biosynthesis</keyword>
<keyword id="KW-0067">ATP-binding</keyword>
<keyword id="KW-0963">Cytoplasm</keyword>
<keyword id="KW-0418">Kinase</keyword>
<keyword id="KW-0547">Nucleotide-binding</keyword>
<keyword id="KW-0641">Proline biosynthesis</keyword>
<keyword id="KW-1185">Reference proteome</keyword>
<keyword id="KW-0808">Transferase</keyword>
<dbReference type="EC" id="2.7.2.11" evidence="1"/>
<dbReference type="EMBL" id="CP000352">
    <property type="protein sequence ID" value="ABF09975.1"/>
    <property type="molecule type" value="Genomic_DNA"/>
</dbReference>
<dbReference type="RefSeq" id="WP_008647250.1">
    <property type="nucleotide sequence ID" value="NC_007973.1"/>
</dbReference>
<dbReference type="SMR" id="Q1LIQ1"/>
<dbReference type="STRING" id="266264.Rmet_3103"/>
<dbReference type="GeneID" id="60820522"/>
<dbReference type="KEGG" id="rme:Rmet_3103"/>
<dbReference type="eggNOG" id="COG0263">
    <property type="taxonomic scope" value="Bacteria"/>
</dbReference>
<dbReference type="HOGENOM" id="CLU_025400_2_0_4"/>
<dbReference type="UniPathway" id="UPA00098">
    <property type="reaction ID" value="UER00359"/>
</dbReference>
<dbReference type="Proteomes" id="UP000002429">
    <property type="component" value="Chromosome"/>
</dbReference>
<dbReference type="GO" id="GO:0005829">
    <property type="term" value="C:cytosol"/>
    <property type="evidence" value="ECO:0007669"/>
    <property type="project" value="TreeGrafter"/>
</dbReference>
<dbReference type="GO" id="GO:0005524">
    <property type="term" value="F:ATP binding"/>
    <property type="evidence" value="ECO:0007669"/>
    <property type="project" value="UniProtKB-KW"/>
</dbReference>
<dbReference type="GO" id="GO:0004349">
    <property type="term" value="F:glutamate 5-kinase activity"/>
    <property type="evidence" value="ECO:0007669"/>
    <property type="project" value="UniProtKB-UniRule"/>
</dbReference>
<dbReference type="GO" id="GO:0003723">
    <property type="term" value="F:RNA binding"/>
    <property type="evidence" value="ECO:0007669"/>
    <property type="project" value="InterPro"/>
</dbReference>
<dbReference type="GO" id="GO:0055129">
    <property type="term" value="P:L-proline biosynthetic process"/>
    <property type="evidence" value="ECO:0007669"/>
    <property type="project" value="UniProtKB-UniRule"/>
</dbReference>
<dbReference type="CDD" id="cd04242">
    <property type="entry name" value="AAK_G5K_ProB"/>
    <property type="match status" value="1"/>
</dbReference>
<dbReference type="CDD" id="cd21157">
    <property type="entry name" value="PUA_G5K"/>
    <property type="match status" value="1"/>
</dbReference>
<dbReference type="FunFam" id="2.30.130.10:FF:000007">
    <property type="entry name" value="Glutamate 5-kinase"/>
    <property type="match status" value="1"/>
</dbReference>
<dbReference type="FunFam" id="3.40.1160.10:FF:000018">
    <property type="entry name" value="Glutamate 5-kinase"/>
    <property type="match status" value="1"/>
</dbReference>
<dbReference type="Gene3D" id="3.40.1160.10">
    <property type="entry name" value="Acetylglutamate kinase-like"/>
    <property type="match status" value="1"/>
</dbReference>
<dbReference type="Gene3D" id="2.30.130.10">
    <property type="entry name" value="PUA domain"/>
    <property type="match status" value="1"/>
</dbReference>
<dbReference type="HAMAP" id="MF_00456">
    <property type="entry name" value="ProB"/>
    <property type="match status" value="1"/>
</dbReference>
<dbReference type="InterPro" id="IPR036393">
    <property type="entry name" value="AceGlu_kinase-like_sf"/>
</dbReference>
<dbReference type="InterPro" id="IPR001048">
    <property type="entry name" value="Asp/Glu/Uridylate_kinase"/>
</dbReference>
<dbReference type="InterPro" id="IPR041739">
    <property type="entry name" value="G5K_ProB"/>
</dbReference>
<dbReference type="InterPro" id="IPR001057">
    <property type="entry name" value="Glu/AcGlu_kinase"/>
</dbReference>
<dbReference type="InterPro" id="IPR011529">
    <property type="entry name" value="Glu_5kinase"/>
</dbReference>
<dbReference type="InterPro" id="IPR005715">
    <property type="entry name" value="Glu_5kinase/COase_Synthase"/>
</dbReference>
<dbReference type="InterPro" id="IPR019797">
    <property type="entry name" value="Glutamate_5-kinase_CS"/>
</dbReference>
<dbReference type="InterPro" id="IPR002478">
    <property type="entry name" value="PUA"/>
</dbReference>
<dbReference type="InterPro" id="IPR015947">
    <property type="entry name" value="PUA-like_sf"/>
</dbReference>
<dbReference type="InterPro" id="IPR036974">
    <property type="entry name" value="PUA_sf"/>
</dbReference>
<dbReference type="NCBIfam" id="TIGR01027">
    <property type="entry name" value="proB"/>
    <property type="match status" value="1"/>
</dbReference>
<dbReference type="PANTHER" id="PTHR43654">
    <property type="entry name" value="GLUTAMATE 5-KINASE"/>
    <property type="match status" value="1"/>
</dbReference>
<dbReference type="PANTHER" id="PTHR43654:SF1">
    <property type="entry name" value="ISOPENTENYL PHOSPHATE KINASE"/>
    <property type="match status" value="1"/>
</dbReference>
<dbReference type="Pfam" id="PF00696">
    <property type="entry name" value="AA_kinase"/>
    <property type="match status" value="1"/>
</dbReference>
<dbReference type="Pfam" id="PF01472">
    <property type="entry name" value="PUA"/>
    <property type="match status" value="1"/>
</dbReference>
<dbReference type="PIRSF" id="PIRSF000729">
    <property type="entry name" value="GK"/>
    <property type="match status" value="1"/>
</dbReference>
<dbReference type="PRINTS" id="PR00474">
    <property type="entry name" value="GLU5KINASE"/>
</dbReference>
<dbReference type="SMART" id="SM00359">
    <property type="entry name" value="PUA"/>
    <property type="match status" value="1"/>
</dbReference>
<dbReference type="SUPFAM" id="SSF53633">
    <property type="entry name" value="Carbamate kinase-like"/>
    <property type="match status" value="1"/>
</dbReference>
<dbReference type="SUPFAM" id="SSF88697">
    <property type="entry name" value="PUA domain-like"/>
    <property type="match status" value="1"/>
</dbReference>
<dbReference type="PROSITE" id="PS00902">
    <property type="entry name" value="GLUTAMATE_5_KINASE"/>
    <property type="match status" value="1"/>
</dbReference>
<dbReference type="PROSITE" id="PS50890">
    <property type="entry name" value="PUA"/>
    <property type="match status" value="1"/>
</dbReference>
<sequence length="372" mass="39344">MQSVIAQAKRIVVKVGSSLVTNDGKGLDHDAIARWAAQIAKLRGTGKEVVLVSSGAIAEGMQRLGWARRPKEIHELQAAAAVGQMGLAQVYESQFGRYGIRTAQVLLTHADLADRERYLNARSTLLTLLSLGVVPIINENDTVVTDEIKFGDNDTLGALVTNLIEGDALVILTDQRGLYTADPRKDPNAEFVHEALAGTPELEAMAGGAGSSIGRGGMLTKILAAKRAAKSGAHTTIASGREADVLGRLAAGEAIGTQLLAPTGRLTARKQWMADHLQLRGRVIIDAGAVEKLTSGGKSLLPIGVVEVQGEFARGEVIACASPEGKEVARGITNYSSAEARLIARKPSSEIESVLGHLNEPELIHRDNLVLV</sequence>
<comment type="function">
    <text evidence="1">Catalyzes the transfer of a phosphate group to glutamate to form L-glutamate 5-phosphate.</text>
</comment>
<comment type="catalytic activity">
    <reaction evidence="1">
        <text>L-glutamate + ATP = L-glutamyl 5-phosphate + ADP</text>
        <dbReference type="Rhea" id="RHEA:14877"/>
        <dbReference type="ChEBI" id="CHEBI:29985"/>
        <dbReference type="ChEBI" id="CHEBI:30616"/>
        <dbReference type="ChEBI" id="CHEBI:58274"/>
        <dbReference type="ChEBI" id="CHEBI:456216"/>
        <dbReference type="EC" id="2.7.2.11"/>
    </reaction>
</comment>
<comment type="pathway">
    <text evidence="1">Amino-acid biosynthesis; L-proline biosynthesis; L-glutamate 5-semialdehyde from L-glutamate: step 1/2.</text>
</comment>
<comment type="subcellular location">
    <subcellularLocation>
        <location evidence="1">Cytoplasm</location>
    </subcellularLocation>
</comment>
<comment type="similarity">
    <text evidence="1">Belongs to the glutamate 5-kinase family.</text>
</comment>
<feature type="chain" id="PRO_0000252991" description="Glutamate 5-kinase">
    <location>
        <begin position="1"/>
        <end position="372"/>
    </location>
</feature>
<feature type="domain" description="PUA" evidence="1">
    <location>
        <begin position="280"/>
        <end position="358"/>
    </location>
</feature>
<feature type="binding site" evidence="1">
    <location>
        <position position="14"/>
    </location>
    <ligand>
        <name>ATP</name>
        <dbReference type="ChEBI" id="CHEBI:30616"/>
    </ligand>
</feature>
<feature type="binding site" evidence="1">
    <location>
        <position position="54"/>
    </location>
    <ligand>
        <name>substrate</name>
    </ligand>
</feature>
<feature type="binding site" evidence="1">
    <location>
        <position position="141"/>
    </location>
    <ligand>
        <name>substrate</name>
    </ligand>
</feature>
<feature type="binding site" evidence="1">
    <location>
        <position position="153"/>
    </location>
    <ligand>
        <name>substrate</name>
    </ligand>
</feature>
<feature type="binding site" evidence="1">
    <location>
        <begin position="173"/>
        <end position="174"/>
    </location>
    <ligand>
        <name>ATP</name>
        <dbReference type="ChEBI" id="CHEBI:30616"/>
    </ligand>
</feature>
<organism>
    <name type="scientific">Cupriavidus metallidurans (strain ATCC 43123 / DSM 2839 / NBRC 102507 / CH34)</name>
    <name type="common">Ralstonia metallidurans</name>
    <dbReference type="NCBI Taxonomy" id="266264"/>
    <lineage>
        <taxon>Bacteria</taxon>
        <taxon>Pseudomonadati</taxon>
        <taxon>Pseudomonadota</taxon>
        <taxon>Betaproteobacteria</taxon>
        <taxon>Burkholderiales</taxon>
        <taxon>Burkholderiaceae</taxon>
        <taxon>Cupriavidus</taxon>
    </lineage>
</organism>
<name>PROB_CUPMC</name>
<proteinExistence type="inferred from homology"/>
<accession>Q1LIQ1</accession>
<evidence type="ECO:0000255" key="1">
    <source>
        <dbReference type="HAMAP-Rule" id="MF_00456"/>
    </source>
</evidence>
<reference key="1">
    <citation type="journal article" date="2010" name="PLoS ONE">
        <title>The complete genome sequence of Cupriavidus metallidurans strain CH34, a master survivalist in harsh and anthropogenic environments.</title>
        <authorList>
            <person name="Janssen P.J."/>
            <person name="Van Houdt R."/>
            <person name="Moors H."/>
            <person name="Monsieurs P."/>
            <person name="Morin N."/>
            <person name="Michaux A."/>
            <person name="Benotmane M.A."/>
            <person name="Leys N."/>
            <person name="Vallaeys T."/>
            <person name="Lapidus A."/>
            <person name="Monchy S."/>
            <person name="Medigue C."/>
            <person name="Taghavi S."/>
            <person name="McCorkle S."/>
            <person name="Dunn J."/>
            <person name="van der Lelie D."/>
            <person name="Mergeay M."/>
        </authorList>
    </citation>
    <scope>NUCLEOTIDE SEQUENCE [LARGE SCALE GENOMIC DNA]</scope>
    <source>
        <strain>ATCC 43123 / DSM 2839 / NBRC 102507 / CH34</strain>
    </source>
</reference>